<comment type="function">
    <text evidence="2">During the asexual blood stage, involved in the sialic acid-independent (SAID) merozoite invasion of host erythrocytes by binding to host SLC4A1/Band 3 protein on the surface of the host erythrocyte.</text>
</comment>
<comment type="subunit">
    <text evidence="2">Forms a complex composed of MSP1, MSP6, MSP7, MSP9 and MSP3; within the complex, MSP6 and MSP9 mediate the binding to the host erythrocyte. Interacts with MSP1 subunits p19 and p42; the interaction is direct. Interacts with host SLC4A1/Band 3 protein (via the 5ABC region). MSP1 subunits p19 or p42, and MSP9 form a co-ligand complex that interacts with host SLC4A1/Band 3 protein.</text>
</comment>
<comment type="subcellular location">
    <subcellularLocation>
        <location evidence="3">Cell membrane</location>
        <topology evidence="3">Peripheral membrane protein</topology>
        <orientation evidence="3">Extracellular side</orientation>
    </subcellularLocation>
    <subcellularLocation>
        <location evidence="3">Parasitophorous vacuole lumen</location>
    </subcellularLocation>
    <subcellularLocation>
        <location evidence="3">Secreted</location>
    </subcellularLocation>
    <text evidence="3">Localizes to the merozoite surface at the time of schizont rupture.</text>
</comment>
<comment type="PTM">
    <text evidence="1">Not glycosylated.</text>
</comment>
<comment type="similarity">
    <text evidence="6">Belongs to the plasmodium ABRA family.</text>
</comment>
<comment type="caution">
    <text evidence="2">A truncated form of MSP9 has serine protease activity in vitro; however, it is not clear if this is physiologically relevant (By similarity). Also, the putative residues forming the catalytic triad (His-55, Asp-94, and Ser-190) are not conserved in P.vivax, P.knowlesi, and P.cynomolgi orthologs casting a doubt on the physiological relevance of the protease activity (By similarity).</text>
</comment>
<dbReference type="EMBL" id="M15514">
    <property type="protein sequence ID" value="AAA29463.1"/>
    <property type="molecule type" value="mRNA"/>
</dbReference>
<dbReference type="SMR" id="P23746"/>
<dbReference type="GO" id="GO:0005576">
    <property type="term" value="C:extracellular region"/>
    <property type="evidence" value="ECO:0007669"/>
    <property type="project" value="UniProtKB-SubCell"/>
</dbReference>
<dbReference type="GO" id="GO:0005886">
    <property type="term" value="C:plasma membrane"/>
    <property type="evidence" value="ECO:0007669"/>
    <property type="project" value="UniProtKB-SubCell"/>
</dbReference>
<sequence>HYKKRKAQEKGLPEPTVTNEEYVEELKKGILDMGIKLLFSKVKSLLKKLKNKIFPKKKEDNQAVDTKSMEEPKVKAQPALRGVEPTEDSNIMNSINNVMDEIDFFEKELIENNNTPNVVPPTQSKKKNKNETVSGMDENFDNHPENYFKEEYYYDENDDMEVKVKKIGVTLKKFEPLKNGNVSETIKLIHLGNKDKKHIEAINNDIQIIKQELQAIYNELMNYTNGNKNIQQIFQQNILENDVLNQETEEEMEKQVEAITKQIEAEVDALAPKNKEEEEKEKEKEKEKEEKEKEEKEKEKEEKEKEEKEKEEKEEKEEEKK</sequence>
<organism>
    <name type="scientific">Plasmodium falciparum (isolate FC27 / Papua New Guinea)</name>
    <dbReference type="NCBI Taxonomy" id="5837"/>
    <lineage>
        <taxon>Eukaryota</taxon>
        <taxon>Sar</taxon>
        <taxon>Alveolata</taxon>
        <taxon>Apicomplexa</taxon>
        <taxon>Aconoidasida</taxon>
        <taxon>Haemosporida</taxon>
        <taxon>Plasmodiidae</taxon>
        <taxon>Plasmodium</taxon>
        <taxon>Plasmodium (Laverania)</taxon>
    </lineage>
</organism>
<reference key="1">
    <citation type="journal article" date="1986" name="Mol. Biol. Med.">
        <title>Sorting large numbers of clones expressing Plasmodium falciparum antigens in Escherichia coli by differential antibody screening.</title>
        <authorList>
            <person name="Stahl H.-D."/>
            <person name="Bianco A.E."/>
            <person name="Crewther P.E."/>
            <person name="Anders R.F."/>
            <person name="Kyne A.P."/>
            <person name="Coppel R.L."/>
            <person name="Mitchell G.F."/>
            <person name="Kemp D.J."/>
            <person name="Brown G.V."/>
        </authorList>
    </citation>
    <scope>NUCLEOTIDE SEQUENCE [MRNA]</scope>
</reference>
<feature type="chain" id="PRO_0000217179" description="Merozoite surface protein 9">
    <location>
        <begin position="1" status="less than"/>
        <end position="321" status="greater than"/>
    </location>
</feature>
<feature type="region of interest" description="Disordered" evidence="4">
    <location>
        <begin position="58"/>
        <end position="88"/>
    </location>
</feature>
<feature type="region of interest" description="Disordered" evidence="4">
    <location>
        <begin position="113"/>
        <end position="141"/>
    </location>
</feature>
<feature type="region of interest" description="Disordered" evidence="4">
    <location>
        <begin position="263"/>
        <end position="321"/>
    </location>
</feature>
<feature type="compositionally biased region" description="Basic and acidic residues" evidence="4">
    <location>
        <begin position="58"/>
        <end position="74"/>
    </location>
</feature>
<feature type="compositionally biased region" description="Low complexity" evidence="4">
    <location>
        <begin position="113"/>
        <end position="122"/>
    </location>
</feature>
<feature type="compositionally biased region" description="Basic and acidic residues" evidence="4">
    <location>
        <begin position="273"/>
        <end position="321"/>
    </location>
</feature>
<feature type="non-terminal residue">
    <location>
        <position position="1"/>
    </location>
</feature>
<feature type="non-terminal residue">
    <location>
        <position position="321"/>
    </location>
</feature>
<name>MSP9_PLAFF</name>
<protein>
    <recommendedName>
        <fullName evidence="2">Merozoite surface protein 9</fullName>
    </recommendedName>
    <alternativeName>
        <fullName evidence="5">101 kDa malaria antigen</fullName>
    </alternativeName>
    <alternativeName>
        <fullName evidence="5">Acidic basic repeat antigen</fullName>
    </alternativeName>
    <alternativeName>
        <fullName evidence="5">p101 protein</fullName>
    </alternativeName>
</protein>
<evidence type="ECO:0000250" key="1">
    <source>
        <dbReference type="UniProtKB" id="P22620"/>
    </source>
</evidence>
<evidence type="ECO:0000250" key="2">
    <source>
        <dbReference type="UniProtKB" id="Q8I5D2"/>
    </source>
</evidence>
<evidence type="ECO:0000250" key="3">
    <source>
        <dbReference type="UniProtKB" id="W7F8N2"/>
    </source>
</evidence>
<evidence type="ECO:0000256" key="4">
    <source>
        <dbReference type="SAM" id="MobiDB-lite"/>
    </source>
</evidence>
<evidence type="ECO:0000303" key="5">
    <source>
    </source>
</evidence>
<evidence type="ECO:0000305" key="6"/>
<gene>
    <name evidence="2" type="primary">MSP9</name>
    <name evidence="5" type="synonym">ABRA</name>
</gene>
<accession>P23746</accession>
<keyword id="KW-1003">Cell membrane</keyword>
<keyword id="KW-0461">Malaria</keyword>
<keyword id="KW-0472">Membrane</keyword>
<keyword id="KW-0964">Secreted</keyword>
<proteinExistence type="evidence at transcript level"/>